<organism>
    <name type="scientific">Mycobacterium bovis (strain BCG / Tokyo 172 / ATCC 35737 / TMC 1019)</name>
    <dbReference type="NCBI Taxonomy" id="561275"/>
    <lineage>
        <taxon>Bacteria</taxon>
        <taxon>Bacillati</taxon>
        <taxon>Actinomycetota</taxon>
        <taxon>Actinomycetes</taxon>
        <taxon>Mycobacteriales</taxon>
        <taxon>Mycobacteriaceae</taxon>
        <taxon>Mycobacterium</taxon>
        <taxon>Mycobacterium tuberculosis complex</taxon>
    </lineage>
</organism>
<gene>
    <name evidence="1" type="primary">gatB</name>
    <name type="ordered locus">JTY_3026</name>
</gene>
<name>GATB_MYCBT</name>
<dbReference type="EC" id="6.3.5.-" evidence="1"/>
<dbReference type="EMBL" id="AP010918">
    <property type="protein sequence ID" value="BAH27304.1"/>
    <property type="molecule type" value="Genomic_DNA"/>
</dbReference>
<dbReference type="RefSeq" id="WP_003415248.1">
    <property type="nucleotide sequence ID" value="NZ_CP014566.1"/>
</dbReference>
<dbReference type="SMR" id="C1AGC5"/>
<dbReference type="KEGG" id="mbt:JTY_3026"/>
<dbReference type="HOGENOM" id="CLU_019240_0_0_11"/>
<dbReference type="GO" id="GO:0050566">
    <property type="term" value="F:asparaginyl-tRNA synthase (glutamine-hydrolyzing) activity"/>
    <property type="evidence" value="ECO:0007669"/>
    <property type="project" value="RHEA"/>
</dbReference>
<dbReference type="GO" id="GO:0005524">
    <property type="term" value="F:ATP binding"/>
    <property type="evidence" value="ECO:0007669"/>
    <property type="project" value="UniProtKB-KW"/>
</dbReference>
<dbReference type="GO" id="GO:0050567">
    <property type="term" value="F:glutaminyl-tRNA synthase (glutamine-hydrolyzing) activity"/>
    <property type="evidence" value="ECO:0007669"/>
    <property type="project" value="UniProtKB-UniRule"/>
</dbReference>
<dbReference type="GO" id="GO:0070681">
    <property type="term" value="P:glutaminyl-tRNAGln biosynthesis via transamidation"/>
    <property type="evidence" value="ECO:0007669"/>
    <property type="project" value="TreeGrafter"/>
</dbReference>
<dbReference type="GO" id="GO:0006412">
    <property type="term" value="P:translation"/>
    <property type="evidence" value="ECO:0007669"/>
    <property type="project" value="UniProtKB-UniRule"/>
</dbReference>
<dbReference type="FunFam" id="1.10.10.410:FF:000002">
    <property type="entry name" value="Aspartyl/glutamyl-tRNA(Asn/Gln) amidotransferase subunit B"/>
    <property type="match status" value="1"/>
</dbReference>
<dbReference type="Gene3D" id="1.10.10.410">
    <property type="match status" value="1"/>
</dbReference>
<dbReference type="HAMAP" id="MF_00121">
    <property type="entry name" value="GatB"/>
    <property type="match status" value="1"/>
</dbReference>
<dbReference type="InterPro" id="IPR017959">
    <property type="entry name" value="Asn/Gln-tRNA_amidoTrfase_suB/E"/>
</dbReference>
<dbReference type="InterPro" id="IPR006075">
    <property type="entry name" value="Asn/Gln-tRNA_Trfase_suB/E_cat"/>
</dbReference>
<dbReference type="InterPro" id="IPR018027">
    <property type="entry name" value="Asn/Gln_amidotransferase"/>
</dbReference>
<dbReference type="InterPro" id="IPR003789">
    <property type="entry name" value="Asn/Gln_tRNA_amidoTrase-B-like"/>
</dbReference>
<dbReference type="InterPro" id="IPR004413">
    <property type="entry name" value="GatB"/>
</dbReference>
<dbReference type="InterPro" id="IPR023168">
    <property type="entry name" value="GatB_Yqey_C_2"/>
</dbReference>
<dbReference type="InterPro" id="IPR017958">
    <property type="entry name" value="Gln-tRNA_amidoTrfase_suB_CS"/>
</dbReference>
<dbReference type="InterPro" id="IPR014746">
    <property type="entry name" value="Gln_synth/guanido_kin_cat_dom"/>
</dbReference>
<dbReference type="NCBIfam" id="TIGR00133">
    <property type="entry name" value="gatB"/>
    <property type="match status" value="1"/>
</dbReference>
<dbReference type="NCBIfam" id="NF004012">
    <property type="entry name" value="PRK05477.1-2"/>
    <property type="match status" value="1"/>
</dbReference>
<dbReference type="NCBIfam" id="NF004013">
    <property type="entry name" value="PRK05477.1-3"/>
    <property type="match status" value="1"/>
</dbReference>
<dbReference type="NCBIfam" id="NF004014">
    <property type="entry name" value="PRK05477.1-4"/>
    <property type="match status" value="1"/>
</dbReference>
<dbReference type="PANTHER" id="PTHR11659">
    <property type="entry name" value="GLUTAMYL-TRNA GLN AMIDOTRANSFERASE SUBUNIT B MITOCHONDRIAL AND PROKARYOTIC PET112-RELATED"/>
    <property type="match status" value="1"/>
</dbReference>
<dbReference type="PANTHER" id="PTHR11659:SF0">
    <property type="entry name" value="GLUTAMYL-TRNA(GLN) AMIDOTRANSFERASE SUBUNIT B, MITOCHONDRIAL"/>
    <property type="match status" value="1"/>
</dbReference>
<dbReference type="Pfam" id="PF02934">
    <property type="entry name" value="GatB_N"/>
    <property type="match status" value="1"/>
</dbReference>
<dbReference type="Pfam" id="PF02637">
    <property type="entry name" value="GatB_Yqey"/>
    <property type="match status" value="1"/>
</dbReference>
<dbReference type="SMART" id="SM00845">
    <property type="entry name" value="GatB_Yqey"/>
    <property type="match status" value="1"/>
</dbReference>
<dbReference type="SUPFAM" id="SSF89095">
    <property type="entry name" value="GatB/YqeY motif"/>
    <property type="match status" value="1"/>
</dbReference>
<dbReference type="SUPFAM" id="SSF55931">
    <property type="entry name" value="Glutamine synthetase/guanido kinase"/>
    <property type="match status" value="1"/>
</dbReference>
<dbReference type="PROSITE" id="PS01234">
    <property type="entry name" value="GATB"/>
    <property type="match status" value="1"/>
</dbReference>
<comment type="function">
    <text evidence="1">Allows the formation of correctly charged Asn-tRNA(Asn) or Gln-tRNA(Gln) through the transamidation of misacylated Asp-tRNA(Asn) or Glu-tRNA(Gln) in organisms which lack either or both of asparaginyl-tRNA or glutaminyl-tRNA synthetases. The reaction takes place in the presence of glutamine and ATP through an activated phospho-Asp-tRNA(Asn) or phospho-Glu-tRNA(Gln).</text>
</comment>
<comment type="catalytic activity">
    <reaction evidence="1">
        <text>L-glutamyl-tRNA(Gln) + L-glutamine + ATP + H2O = L-glutaminyl-tRNA(Gln) + L-glutamate + ADP + phosphate + H(+)</text>
        <dbReference type="Rhea" id="RHEA:17521"/>
        <dbReference type="Rhea" id="RHEA-COMP:9681"/>
        <dbReference type="Rhea" id="RHEA-COMP:9684"/>
        <dbReference type="ChEBI" id="CHEBI:15377"/>
        <dbReference type="ChEBI" id="CHEBI:15378"/>
        <dbReference type="ChEBI" id="CHEBI:29985"/>
        <dbReference type="ChEBI" id="CHEBI:30616"/>
        <dbReference type="ChEBI" id="CHEBI:43474"/>
        <dbReference type="ChEBI" id="CHEBI:58359"/>
        <dbReference type="ChEBI" id="CHEBI:78520"/>
        <dbReference type="ChEBI" id="CHEBI:78521"/>
        <dbReference type="ChEBI" id="CHEBI:456216"/>
    </reaction>
</comment>
<comment type="catalytic activity">
    <reaction evidence="1">
        <text>L-aspartyl-tRNA(Asn) + L-glutamine + ATP + H2O = L-asparaginyl-tRNA(Asn) + L-glutamate + ADP + phosphate + 2 H(+)</text>
        <dbReference type="Rhea" id="RHEA:14513"/>
        <dbReference type="Rhea" id="RHEA-COMP:9674"/>
        <dbReference type="Rhea" id="RHEA-COMP:9677"/>
        <dbReference type="ChEBI" id="CHEBI:15377"/>
        <dbReference type="ChEBI" id="CHEBI:15378"/>
        <dbReference type="ChEBI" id="CHEBI:29985"/>
        <dbReference type="ChEBI" id="CHEBI:30616"/>
        <dbReference type="ChEBI" id="CHEBI:43474"/>
        <dbReference type="ChEBI" id="CHEBI:58359"/>
        <dbReference type="ChEBI" id="CHEBI:78515"/>
        <dbReference type="ChEBI" id="CHEBI:78516"/>
        <dbReference type="ChEBI" id="CHEBI:456216"/>
    </reaction>
</comment>
<comment type="subunit">
    <text evidence="1">Heterotrimer of A, B and C subunits.</text>
</comment>
<comment type="similarity">
    <text evidence="1">Belongs to the GatB/GatE family. GatB subfamily.</text>
</comment>
<reference key="1">
    <citation type="journal article" date="2009" name="Vaccine">
        <title>Whole genome sequence analysis of Mycobacterium bovis bacillus Calmette-Guerin (BCG) Tokyo 172: a comparative study of BCG vaccine substrains.</title>
        <authorList>
            <person name="Seki M."/>
            <person name="Honda I."/>
            <person name="Fujita I."/>
            <person name="Yano I."/>
            <person name="Yamamoto S."/>
            <person name="Koyama A."/>
        </authorList>
    </citation>
    <scope>NUCLEOTIDE SEQUENCE [LARGE SCALE GENOMIC DNA]</scope>
    <source>
        <strain>BCG / Tokyo 172 / ATCC 35737 / TMC 1019</strain>
    </source>
</reference>
<protein>
    <recommendedName>
        <fullName evidence="1">Aspartyl/glutamyl-tRNA(Asn/Gln) amidotransferase subunit B</fullName>
        <shortName evidence="1">Asp/Glu-ADT subunit B</shortName>
        <ecNumber evidence="1">6.3.5.-</ecNumber>
    </recommendedName>
</protein>
<evidence type="ECO:0000255" key="1">
    <source>
        <dbReference type="HAMAP-Rule" id="MF_00121"/>
    </source>
</evidence>
<proteinExistence type="inferred from homology"/>
<sequence length="509" mass="54633">MTVAAGAAKAAGAELLDYDEVVARFQPVLGLEVHVELSTATKMFCGCTTTFGGEPNTQVCPVCLGLPGSLPVLNRAAVESAIRIGLALNCEIVPWCRFARKNYFYPDMPKNYQISQYDEPIAINGYLDAPLEDGTTWRVEIERAHMEEDTGKLTHIGSETGRIHGATGSLIDYNRAGVPLIEIVTKPIVGAGARAPQIARSYVTALRDLLRALDVSDVRMDQGSMRCDANVSLKPAGTTEFGTRTETKNVNSLKSVEVAVRYEMQRQGAILASGGRITQETRHFHEAGYTSAGRTKETAEDYRYFPEPDLEPVAPSRELVERLRQTIPELPWLSRRRIQQEWGVSDEVMRDLVNAGAVELVAATVEHGASSEAARAWWGNFLAQKANEAGIGLDELAITPAQVAAVVALVDEGKLSNSLARQVVEGVLAGEGEPEQVMTARGLALVRDDSLTQAAVDEALAANPDVADKIRGGKVAAAGAIVGAVMKATRGQADAARVRELVLEACGQG</sequence>
<keyword id="KW-0067">ATP-binding</keyword>
<keyword id="KW-0436">Ligase</keyword>
<keyword id="KW-0547">Nucleotide-binding</keyword>
<keyword id="KW-0648">Protein biosynthesis</keyword>
<accession>C1AGC5</accession>
<feature type="chain" id="PRO_1000122528" description="Aspartyl/glutamyl-tRNA(Asn/Gln) amidotransferase subunit B">
    <location>
        <begin position="1"/>
        <end position="509"/>
    </location>
</feature>